<comment type="function">
    <text evidence="1">Catalyzes the transfer of an acetyl group from acetyl-CoA to tetrahydrodipicolinate.</text>
</comment>
<comment type="catalytic activity">
    <reaction evidence="1">
        <text>(S)-2,3,4,5-tetrahydrodipicolinate + acetyl-CoA + H2O = L-2-acetamido-6-oxoheptanedioate + CoA</text>
        <dbReference type="Rhea" id="RHEA:13085"/>
        <dbReference type="ChEBI" id="CHEBI:15377"/>
        <dbReference type="ChEBI" id="CHEBI:16845"/>
        <dbReference type="ChEBI" id="CHEBI:57287"/>
        <dbReference type="ChEBI" id="CHEBI:57288"/>
        <dbReference type="ChEBI" id="CHEBI:58117"/>
        <dbReference type="EC" id="2.3.1.89"/>
    </reaction>
</comment>
<comment type="pathway">
    <text evidence="1">Amino-acid biosynthesis; L-lysine biosynthesis via DAP pathway; LL-2,6-diaminopimelate from (S)-tetrahydrodipicolinate (acetylase route): step 1/3.</text>
</comment>
<comment type="similarity">
    <text evidence="1">Belongs to the transferase hexapeptide repeat family. DapH subfamily.</text>
</comment>
<proteinExistence type="inferred from homology"/>
<evidence type="ECO:0000255" key="1">
    <source>
        <dbReference type="HAMAP-Rule" id="MF_01691"/>
    </source>
</evidence>
<organism>
    <name type="scientific">Limosilactobacillus reuteri subsp. reuteri (strain JCM 1112)</name>
    <name type="common">Lactobacillus reuteri</name>
    <dbReference type="NCBI Taxonomy" id="557433"/>
    <lineage>
        <taxon>Bacteria</taxon>
        <taxon>Bacillati</taxon>
        <taxon>Bacillota</taxon>
        <taxon>Bacilli</taxon>
        <taxon>Lactobacillales</taxon>
        <taxon>Lactobacillaceae</taxon>
        <taxon>Limosilactobacillus</taxon>
    </lineage>
</organism>
<dbReference type="EC" id="2.3.1.89" evidence="1"/>
<dbReference type="EMBL" id="AP007281">
    <property type="protein sequence ID" value="BAG25109.1"/>
    <property type="molecule type" value="Genomic_DNA"/>
</dbReference>
<dbReference type="SMR" id="B2G6M7"/>
<dbReference type="KEGG" id="lrf:LAR_0593"/>
<dbReference type="HOGENOM" id="CLU_103751_0_0_9"/>
<dbReference type="UniPathway" id="UPA00034">
    <property type="reaction ID" value="UER00022"/>
</dbReference>
<dbReference type="GO" id="GO:0047200">
    <property type="term" value="F:tetrahydrodipicolinate N-acetyltransferase activity"/>
    <property type="evidence" value="ECO:0007669"/>
    <property type="project" value="UniProtKB-EC"/>
</dbReference>
<dbReference type="GO" id="GO:0019877">
    <property type="term" value="P:diaminopimelate biosynthetic process"/>
    <property type="evidence" value="ECO:0007669"/>
    <property type="project" value="UniProtKB-UniRule"/>
</dbReference>
<dbReference type="GO" id="GO:0009089">
    <property type="term" value="P:lysine biosynthetic process via diaminopimelate"/>
    <property type="evidence" value="ECO:0007669"/>
    <property type="project" value="UniProtKB-UniRule"/>
</dbReference>
<dbReference type="CDD" id="cd03350">
    <property type="entry name" value="LbH_THP_succinylT"/>
    <property type="match status" value="1"/>
</dbReference>
<dbReference type="Gene3D" id="2.160.10.10">
    <property type="entry name" value="Hexapeptide repeat proteins"/>
    <property type="match status" value="1"/>
</dbReference>
<dbReference type="Gene3D" id="3.30.70.250">
    <property type="entry name" value="Malonyl-CoA ACP transacylase, ACP-binding"/>
    <property type="match status" value="1"/>
</dbReference>
<dbReference type="HAMAP" id="MF_01691">
    <property type="entry name" value="DapH"/>
    <property type="match status" value="1"/>
</dbReference>
<dbReference type="InterPro" id="IPR019873">
    <property type="entry name" value="DapH"/>
</dbReference>
<dbReference type="InterPro" id="IPR013710">
    <property type="entry name" value="DapH_N"/>
</dbReference>
<dbReference type="InterPro" id="IPR001451">
    <property type="entry name" value="Hexapep"/>
</dbReference>
<dbReference type="InterPro" id="IPR018357">
    <property type="entry name" value="Hexapep_transf_CS"/>
</dbReference>
<dbReference type="InterPro" id="IPR050179">
    <property type="entry name" value="Trans_hexapeptide_repeat"/>
</dbReference>
<dbReference type="InterPro" id="IPR011004">
    <property type="entry name" value="Trimer_LpxA-like_sf"/>
</dbReference>
<dbReference type="NCBIfam" id="TIGR03532">
    <property type="entry name" value="DapD_Ac"/>
    <property type="match status" value="1"/>
</dbReference>
<dbReference type="PANTHER" id="PTHR43300:SF10">
    <property type="entry name" value="2,3,4,5-TETRAHYDROPYRIDINE-2,6-DICARBOXYLATE N-ACETYLTRANSFERASE"/>
    <property type="match status" value="1"/>
</dbReference>
<dbReference type="PANTHER" id="PTHR43300">
    <property type="entry name" value="ACETYLTRANSFERASE"/>
    <property type="match status" value="1"/>
</dbReference>
<dbReference type="Pfam" id="PF08503">
    <property type="entry name" value="DapH_N"/>
    <property type="match status" value="1"/>
</dbReference>
<dbReference type="Pfam" id="PF00132">
    <property type="entry name" value="Hexapep"/>
    <property type="match status" value="1"/>
</dbReference>
<dbReference type="Pfam" id="PF14602">
    <property type="entry name" value="Hexapep_2"/>
    <property type="match status" value="1"/>
</dbReference>
<dbReference type="SUPFAM" id="SSF51161">
    <property type="entry name" value="Trimeric LpxA-like enzymes"/>
    <property type="match status" value="1"/>
</dbReference>
<dbReference type="PROSITE" id="PS00101">
    <property type="entry name" value="HEXAPEP_TRANSFERASES"/>
    <property type="match status" value="1"/>
</dbReference>
<name>DAPH_LIMRJ</name>
<reference key="1">
    <citation type="journal article" date="2008" name="DNA Res.">
        <title>Comparative genome analysis of Lactobacillus reuteri and Lactobacillus fermentum reveal a genomic island for reuterin and cobalamin production.</title>
        <authorList>
            <person name="Morita H."/>
            <person name="Toh H."/>
            <person name="Fukuda S."/>
            <person name="Horikawa H."/>
            <person name="Oshima K."/>
            <person name="Suzuki T."/>
            <person name="Murakami M."/>
            <person name="Hisamatsu S."/>
            <person name="Kato Y."/>
            <person name="Takizawa T."/>
            <person name="Fukuoka H."/>
            <person name="Yoshimura T."/>
            <person name="Itoh K."/>
            <person name="O'Sullivan D.J."/>
            <person name="McKay L.L."/>
            <person name="Ohno H."/>
            <person name="Kikuchi J."/>
            <person name="Masaoka T."/>
            <person name="Hattori M."/>
        </authorList>
    </citation>
    <scope>NUCLEOTIDE SEQUENCE [LARGE SCALE GENOMIC DNA]</scope>
    <source>
        <strain>JCM 1112</strain>
    </source>
</reference>
<sequence>MAELDAQTIINYISNAPKKTPVKVYLKGNLGDLEFPAEVETFLEQHTGVIFGDWTVIEPLLKEYSSAIESYHVENDARNSAVPLLDLKNINARIEPGAIIRDKVLIGDNAVIMMGATINIGAEIGADSMIDMGAVLGGRAIVGRHCHIGAGTVLAGVVEPASAEPVRIDDNVMVGANAVVIEGVHVGEGAVIAAGAIVTHDVAPHTMVAGVPAKFIKNVDDQTAGKTELEDDLRKL</sequence>
<keyword id="KW-0012">Acyltransferase</keyword>
<keyword id="KW-0028">Amino-acid biosynthesis</keyword>
<keyword id="KW-0220">Diaminopimelate biosynthesis</keyword>
<keyword id="KW-0457">Lysine biosynthesis</keyword>
<keyword id="KW-0677">Repeat</keyword>
<keyword id="KW-0808">Transferase</keyword>
<accession>B2G6M7</accession>
<gene>
    <name evidence="1" type="primary">dapH</name>
    <name type="ordered locus">LAR_0593</name>
</gene>
<feature type="chain" id="PRO_0000376669" description="2,3,4,5-tetrahydropyridine-2,6-dicarboxylate N-acetyltransferase">
    <location>
        <begin position="1"/>
        <end position="236"/>
    </location>
</feature>
<protein>
    <recommendedName>
        <fullName evidence="1">2,3,4,5-tetrahydropyridine-2,6-dicarboxylate N-acetyltransferase</fullName>
        <ecNumber evidence="1">2.3.1.89</ecNumber>
    </recommendedName>
    <alternativeName>
        <fullName evidence="1">Tetrahydrodipicolinate N-acetyltransferase</fullName>
        <shortName evidence="1">THP acetyltransferase</shortName>
        <shortName evidence="1">Tetrahydropicolinate acetylase</shortName>
    </alternativeName>
</protein>